<keyword id="KW-0064">Aspartyl protease</keyword>
<keyword id="KW-0997">Cell inner membrane</keyword>
<keyword id="KW-1003">Cell membrane</keyword>
<keyword id="KW-0378">Hydrolase</keyword>
<keyword id="KW-0472">Membrane</keyword>
<keyword id="KW-0645">Protease</keyword>
<keyword id="KW-1185">Reference proteome</keyword>
<keyword id="KW-0812">Transmembrane</keyword>
<keyword id="KW-1133">Transmembrane helix</keyword>
<name>LSPA_CHRVO</name>
<accession>Q7NS58</accession>
<comment type="function">
    <text evidence="1">This protein specifically catalyzes the removal of signal peptides from prolipoproteins.</text>
</comment>
<comment type="catalytic activity">
    <reaction evidence="1">
        <text>Release of signal peptides from bacterial membrane prolipoproteins. Hydrolyzes -Xaa-Yaa-Zaa-|-(S,diacylglyceryl)Cys-, in which Xaa is hydrophobic (preferably Leu), and Yaa (Ala or Ser) and Zaa (Gly or Ala) have small, neutral side chains.</text>
        <dbReference type="EC" id="3.4.23.36"/>
    </reaction>
</comment>
<comment type="pathway">
    <text evidence="1">Protein modification; lipoprotein biosynthesis (signal peptide cleavage).</text>
</comment>
<comment type="subcellular location">
    <subcellularLocation>
        <location evidence="1">Cell inner membrane</location>
        <topology evidence="1">Multi-pass membrane protein</topology>
    </subcellularLocation>
</comment>
<comment type="similarity">
    <text evidence="1">Belongs to the peptidase A8 family.</text>
</comment>
<comment type="sequence caution" evidence="2">
    <conflict type="erroneous initiation">
        <sequence resource="EMBL-CDS" id="AAQ61230"/>
    </conflict>
</comment>
<organism>
    <name type="scientific">Chromobacterium violaceum (strain ATCC 12472 / DSM 30191 / JCM 1249 / CCUG 213 / NBRC 12614 / NCIMB 9131 / NCTC 9757 / MK)</name>
    <dbReference type="NCBI Taxonomy" id="243365"/>
    <lineage>
        <taxon>Bacteria</taxon>
        <taxon>Pseudomonadati</taxon>
        <taxon>Pseudomonadota</taxon>
        <taxon>Betaproteobacteria</taxon>
        <taxon>Neisseriales</taxon>
        <taxon>Chromobacteriaceae</taxon>
        <taxon>Chromobacterium</taxon>
    </lineage>
</organism>
<evidence type="ECO:0000255" key="1">
    <source>
        <dbReference type="HAMAP-Rule" id="MF_00161"/>
    </source>
</evidence>
<evidence type="ECO:0000305" key="2"/>
<feature type="chain" id="PRO_0000289366" description="Lipoprotein signal peptidase">
    <location>
        <begin position="1"/>
        <end position="162"/>
    </location>
</feature>
<feature type="transmembrane region" description="Helical" evidence="1">
    <location>
        <begin position="12"/>
        <end position="32"/>
    </location>
</feature>
<feature type="transmembrane region" description="Helical" evidence="1">
    <location>
        <begin position="42"/>
        <end position="62"/>
    </location>
</feature>
<feature type="transmembrane region" description="Helical" evidence="1">
    <location>
        <begin position="66"/>
        <end position="86"/>
    </location>
</feature>
<feature type="transmembrane region" description="Helical" evidence="1">
    <location>
        <begin position="93"/>
        <end position="113"/>
    </location>
</feature>
<feature type="transmembrane region" description="Helical" evidence="1">
    <location>
        <begin position="133"/>
        <end position="153"/>
    </location>
</feature>
<feature type="active site" evidence="1">
    <location>
        <position position="123"/>
    </location>
</feature>
<feature type="active site" evidence="1">
    <location>
        <position position="142"/>
    </location>
</feature>
<gene>
    <name evidence="1" type="primary">lspA</name>
    <name type="ordered locus">CV_3568</name>
</gene>
<proteinExistence type="inferred from homology"/>
<protein>
    <recommendedName>
        <fullName evidence="1">Lipoprotein signal peptidase</fullName>
        <ecNumber evidence="1">3.4.23.36</ecNumber>
    </recommendedName>
    <alternativeName>
        <fullName evidence="1">Prolipoprotein signal peptidase</fullName>
    </alternativeName>
    <alternativeName>
        <fullName evidence="1">Signal peptidase II</fullName>
        <shortName evidence="1">SPase II</shortName>
    </alternativeName>
</protein>
<sequence>MTMPGARGWPKWFALAALVIVLDQISKLYFNSRFQYGEIRPVVEGFFNFTLVYNPGAAFSFLHDAGGWQKYLFTILAFAVSGWLGWNIVKRRFSGLMNLAAAFIMGGALGNVIDRLAYGHVIDFIMVHYYNEWYYPAFNLADSFICVGAALMVADSMKKPSR</sequence>
<reference key="1">
    <citation type="journal article" date="2003" name="Proc. Natl. Acad. Sci. U.S.A.">
        <title>The complete genome sequence of Chromobacterium violaceum reveals remarkable and exploitable bacterial adaptability.</title>
        <authorList>
            <person name="Vasconcelos A.T.R."/>
            <person name="de Almeida D.F."/>
            <person name="Hungria M."/>
            <person name="Guimaraes C.T."/>
            <person name="Antonio R.V."/>
            <person name="Almeida F.C."/>
            <person name="de Almeida L.G.P."/>
            <person name="de Almeida R."/>
            <person name="Alves-Gomes J.A."/>
            <person name="Andrade E.M."/>
            <person name="Araripe J."/>
            <person name="de Araujo M.F.F."/>
            <person name="Astolfi-Filho S."/>
            <person name="Azevedo V."/>
            <person name="Baptista A.J."/>
            <person name="Bataus L.A.M."/>
            <person name="Batista J.S."/>
            <person name="Belo A."/>
            <person name="van den Berg C."/>
            <person name="Bogo M."/>
            <person name="Bonatto S."/>
            <person name="Bordignon J."/>
            <person name="Brigido M.M."/>
            <person name="Brito C.A."/>
            <person name="Brocchi M."/>
            <person name="Burity H.A."/>
            <person name="Camargo A.A."/>
            <person name="Cardoso D.D.P."/>
            <person name="Carneiro N.P."/>
            <person name="Carraro D.M."/>
            <person name="Carvalho C.M.B."/>
            <person name="Cascardo J.C.M."/>
            <person name="Cavada B.S."/>
            <person name="Chueire L.M.O."/>
            <person name="Creczynski-Pasa T.B."/>
            <person name="Cunha-Junior N.C."/>
            <person name="Fagundes N."/>
            <person name="Falcao C.L."/>
            <person name="Fantinatti F."/>
            <person name="Farias I.P."/>
            <person name="Felipe M.S.S."/>
            <person name="Ferrari L.P."/>
            <person name="Ferro J.A."/>
            <person name="Ferro M.I.T."/>
            <person name="Franco G.R."/>
            <person name="Freitas N.S.A."/>
            <person name="Furlan L.R."/>
            <person name="Gazzinelli R.T."/>
            <person name="Gomes E.A."/>
            <person name="Goncalves P.R."/>
            <person name="Grangeiro T.B."/>
            <person name="Grattapaglia D."/>
            <person name="Grisard E.C."/>
            <person name="Hanna E.S."/>
            <person name="Jardim S.N."/>
            <person name="Laurino J."/>
            <person name="Leoi L.C.T."/>
            <person name="Lima L.F.A."/>
            <person name="Loureiro M.F."/>
            <person name="Lyra M.C.C.P."/>
            <person name="Madeira H.M.F."/>
            <person name="Manfio G.P."/>
            <person name="Maranhao A.Q."/>
            <person name="Martins W.S."/>
            <person name="di Mauro S.M.Z."/>
            <person name="de Medeiros S.R.B."/>
            <person name="Meissner R.V."/>
            <person name="Moreira M.A.M."/>
            <person name="Nascimento F.F."/>
            <person name="Nicolas M.F."/>
            <person name="Oliveira J.G."/>
            <person name="Oliveira S.C."/>
            <person name="Paixao R.F.C."/>
            <person name="Parente J.A."/>
            <person name="Pedrosa F.O."/>
            <person name="Pena S.D.J."/>
            <person name="Pereira J.O."/>
            <person name="Pereira M."/>
            <person name="Pinto L.S.R.C."/>
            <person name="Pinto L.S."/>
            <person name="Porto J.I.R."/>
            <person name="Potrich D.P."/>
            <person name="Ramalho-Neto C.E."/>
            <person name="Reis A.M.M."/>
            <person name="Rigo L.U."/>
            <person name="Rondinelli E."/>
            <person name="Santos E.B.P."/>
            <person name="Santos F.R."/>
            <person name="Schneider M.P.C."/>
            <person name="Seuanez H.N."/>
            <person name="Silva A.M.R."/>
            <person name="da Silva A.L.C."/>
            <person name="Silva D.W."/>
            <person name="Silva R."/>
            <person name="Simoes I.C."/>
            <person name="Simon D."/>
            <person name="Soares C.M.A."/>
            <person name="Soares R.B.A."/>
            <person name="Souza E.M."/>
            <person name="Souza K.R.L."/>
            <person name="Souza R.C."/>
            <person name="Steffens M.B.R."/>
            <person name="Steindel M."/>
            <person name="Teixeira S.R."/>
            <person name="Urmenyi T."/>
            <person name="Vettore A."/>
            <person name="Wassem R."/>
            <person name="Zaha A."/>
            <person name="Simpson A.J.G."/>
        </authorList>
    </citation>
    <scope>NUCLEOTIDE SEQUENCE [LARGE SCALE GENOMIC DNA]</scope>
    <source>
        <strain>ATCC 12472 / DSM 30191 / JCM 1249 / CCUG 213 / NBRC 12614 / NCIMB 9131 / NCTC 9757 / MK</strain>
    </source>
</reference>
<dbReference type="EC" id="3.4.23.36" evidence="1"/>
<dbReference type="EMBL" id="AE016825">
    <property type="protein sequence ID" value="AAQ61230.1"/>
    <property type="status" value="ALT_INIT"/>
    <property type="molecule type" value="Genomic_DNA"/>
</dbReference>
<dbReference type="SMR" id="Q7NS58"/>
<dbReference type="STRING" id="243365.CV_3568"/>
<dbReference type="KEGG" id="cvi:CV_3568"/>
<dbReference type="eggNOG" id="COG0597">
    <property type="taxonomic scope" value="Bacteria"/>
</dbReference>
<dbReference type="HOGENOM" id="CLU_083252_4_0_4"/>
<dbReference type="UniPathway" id="UPA00665"/>
<dbReference type="Proteomes" id="UP000001424">
    <property type="component" value="Chromosome"/>
</dbReference>
<dbReference type="GO" id="GO:0005886">
    <property type="term" value="C:plasma membrane"/>
    <property type="evidence" value="ECO:0007669"/>
    <property type="project" value="UniProtKB-SubCell"/>
</dbReference>
<dbReference type="GO" id="GO:0004190">
    <property type="term" value="F:aspartic-type endopeptidase activity"/>
    <property type="evidence" value="ECO:0007669"/>
    <property type="project" value="UniProtKB-UniRule"/>
</dbReference>
<dbReference type="GO" id="GO:0006508">
    <property type="term" value="P:proteolysis"/>
    <property type="evidence" value="ECO:0007669"/>
    <property type="project" value="UniProtKB-KW"/>
</dbReference>
<dbReference type="HAMAP" id="MF_00161">
    <property type="entry name" value="LspA"/>
    <property type="match status" value="1"/>
</dbReference>
<dbReference type="InterPro" id="IPR001872">
    <property type="entry name" value="Peptidase_A8"/>
</dbReference>
<dbReference type="NCBIfam" id="TIGR00077">
    <property type="entry name" value="lspA"/>
    <property type="match status" value="1"/>
</dbReference>
<dbReference type="PANTHER" id="PTHR33695">
    <property type="entry name" value="LIPOPROTEIN SIGNAL PEPTIDASE"/>
    <property type="match status" value="1"/>
</dbReference>
<dbReference type="PANTHER" id="PTHR33695:SF1">
    <property type="entry name" value="LIPOPROTEIN SIGNAL PEPTIDASE"/>
    <property type="match status" value="1"/>
</dbReference>
<dbReference type="Pfam" id="PF01252">
    <property type="entry name" value="Peptidase_A8"/>
    <property type="match status" value="1"/>
</dbReference>
<dbReference type="PRINTS" id="PR00781">
    <property type="entry name" value="LIPOSIGPTASE"/>
</dbReference>
<dbReference type="PROSITE" id="PS00855">
    <property type="entry name" value="SPASE_II"/>
    <property type="match status" value="1"/>
</dbReference>